<name>CARA_SALTY</name>
<sequence length="382" mass="41651">MIKSALLVLEDGTQFHGRAIGATGSAVGEVVFNTSMTGYQEILTDPSYSRQIVTLTYPHIGNVGTNKADEESSQVHAQGLVIRDLPLIASNFRNTEDLSSYLKRHNIVAIADIDTRKLTRLLREKGAQNGCIIAGDSPDAKLALEKAKAFPGLNGMDLAKEVTTAETYRWTQGSWTLKDGLPEAKSEDDLPFHVVAYDFGAKRNILRMLVDRGCRLTVVPAQTSAEEVLKMNPDGIFLSNGPGDPAPCDYAITAIQKFLETDIPLFGICLGHQLLALASGAKTVKMKFGHHGGNHPVKDMDRNVVMITAQNHGFAVDEDSLPANLRVTHKSLFDGTLQGIHRTDKPAFSFQGHPEASPGPHDAAPLFDHFIELIEQYRQSAK</sequence>
<proteinExistence type="inferred from homology"/>
<feature type="chain" id="PRO_0000112313" description="Carbamoyl phosphate synthase small chain">
    <location>
        <begin position="1"/>
        <end position="382"/>
    </location>
</feature>
<feature type="domain" description="Glutamine amidotransferase type-1" evidence="1">
    <location>
        <begin position="193"/>
        <end position="380"/>
    </location>
</feature>
<feature type="region of interest" description="CPSase" evidence="1">
    <location>
        <begin position="1"/>
        <end position="189"/>
    </location>
</feature>
<feature type="active site" description="Nucleophile" evidence="1">
    <location>
        <position position="269"/>
    </location>
</feature>
<feature type="active site" evidence="1">
    <location>
        <position position="353"/>
    </location>
</feature>
<feature type="active site" evidence="1">
    <location>
        <position position="355"/>
    </location>
</feature>
<feature type="binding site" evidence="1">
    <location>
        <position position="47"/>
    </location>
    <ligand>
        <name>L-glutamine</name>
        <dbReference type="ChEBI" id="CHEBI:58359"/>
    </ligand>
</feature>
<feature type="binding site" evidence="1">
    <location>
        <position position="241"/>
    </location>
    <ligand>
        <name>L-glutamine</name>
        <dbReference type="ChEBI" id="CHEBI:58359"/>
    </ligand>
</feature>
<feature type="binding site" evidence="1">
    <location>
        <position position="243"/>
    </location>
    <ligand>
        <name>L-glutamine</name>
        <dbReference type="ChEBI" id="CHEBI:58359"/>
    </ligand>
</feature>
<feature type="binding site" evidence="1">
    <location>
        <position position="270"/>
    </location>
    <ligand>
        <name>L-glutamine</name>
        <dbReference type="ChEBI" id="CHEBI:58359"/>
    </ligand>
</feature>
<feature type="binding site" evidence="1">
    <location>
        <position position="273"/>
    </location>
    <ligand>
        <name>L-glutamine</name>
        <dbReference type="ChEBI" id="CHEBI:58359"/>
    </ligand>
</feature>
<feature type="binding site" evidence="1">
    <location>
        <position position="311"/>
    </location>
    <ligand>
        <name>L-glutamine</name>
        <dbReference type="ChEBI" id="CHEBI:58359"/>
    </ligand>
</feature>
<feature type="binding site" evidence="1">
    <location>
        <position position="313"/>
    </location>
    <ligand>
        <name>L-glutamine</name>
        <dbReference type="ChEBI" id="CHEBI:58359"/>
    </ligand>
</feature>
<feature type="binding site" evidence="1">
    <location>
        <position position="314"/>
    </location>
    <ligand>
        <name>L-glutamine</name>
        <dbReference type="ChEBI" id="CHEBI:58359"/>
    </ligand>
</feature>
<feature type="sequence conflict" description="In Ref. 1 and 2." evidence="2" ref="1 2">
    <original>Q</original>
    <variation>H</variation>
    <location>
        <position position="14"/>
    </location>
</feature>
<feature type="sequence conflict" description="In Ref. 1 and 2." evidence="2" ref="1 2">
    <original>L</original>
    <variation>V</variation>
    <location>
        <position position="43"/>
    </location>
</feature>
<organism>
    <name type="scientific">Salmonella typhimurium (strain LT2 / SGSC1412 / ATCC 700720)</name>
    <dbReference type="NCBI Taxonomy" id="99287"/>
    <lineage>
        <taxon>Bacteria</taxon>
        <taxon>Pseudomonadati</taxon>
        <taxon>Pseudomonadota</taxon>
        <taxon>Gammaproteobacteria</taxon>
        <taxon>Enterobacterales</taxon>
        <taxon>Enterobacteriaceae</taxon>
        <taxon>Salmonella</taxon>
    </lineage>
</organism>
<evidence type="ECO:0000255" key="1">
    <source>
        <dbReference type="HAMAP-Rule" id="MF_01209"/>
    </source>
</evidence>
<evidence type="ECO:0000305" key="2"/>
<keyword id="KW-0028">Amino-acid biosynthesis</keyword>
<keyword id="KW-0055">Arginine biosynthesis</keyword>
<keyword id="KW-0067">ATP-binding</keyword>
<keyword id="KW-0315">Glutamine amidotransferase</keyword>
<keyword id="KW-0436">Ligase</keyword>
<keyword id="KW-0547">Nucleotide-binding</keyword>
<keyword id="KW-0665">Pyrimidine biosynthesis</keyword>
<keyword id="KW-1185">Reference proteome</keyword>
<gene>
    <name evidence="1" type="primary">carA</name>
    <name type="ordered locus">STM0066</name>
</gene>
<dbReference type="EC" id="6.3.5.5" evidence="1"/>
<dbReference type="EMBL" id="M36540">
    <property type="protein sequence ID" value="AAA27032.1"/>
    <property type="molecule type" value="Genomic_DNA"/>
</dbReference>
<dbReference type="EMBL" id="U81260">
    <property type="protein sequence ID" value="AAB39255.1"/>
    <property type="molecule type" value="Genomic_DNA"/>
</dbReference>
<dbReference type="EMBL" id="AE006468">
    <property type="protein sequence ID" value="AAL19030.1"/>
    <property type="molecule type" value="Genomic_DNA"/>
</dbReference>
<dbReference type="PIR" id="S01319">
    <property type="entry name" value="S01319"/>
</dbReference>
<dbReference type="RefSeq" id="NP_459071.1">
    <property type="nucleotide sequence ID" value="NC_003197.2"/>
</dbReference>
<dbReference type="RefSeq" id="WP_000597287.1">
    <property type="nucleotide sequence ID" value="NC_003197.2"/>
</dbReference>
<dbReference type="SMR" id="P14845"/>
<dbReference type="STRING" id="99287.STM0066"/>
<dbReference type="MEROPS" id="C26.954"/>
<dbReference type="PaxDb" id="99287-STM0066"/>
<dbReference type="GeneID" id="1251584"/>
<dbReference type="KEGG" id="stm:STM0066"/>
<dbReference type="PATRIC" id="fig|99287.12.peg.68"/>
<dbReference type="HOGENOM" id="CLU_035901_1_1_6"/>
<dbReference type="OMA" id="CFSVQYH"/>
<dbReference type="PhylomeDB" id="P14845"/>
<dbReference type="BioCyc" id="SENT99287:STM0066-MONOMER"/>
<dbReference type="UniPathway" id="UPA00068">
    <property type="reaction ID" value="UER00171"/>
</dbReference>
<dbReference type="UniPathway" id="UPA00070">
    <property type="reaction ID" value="UER00115"/>
</dbReference>
<dbReference type="Proteomes" id="UP000001014">
    <property type="component" value="Chromosome"/>
</dbReference>
<dbReference type="GO" id="GO:0005951">
    <property type="term" value="C:carbamoyl-phosphate synthase complex"/>
    <property type="evidence" value="ECO:0000318"/>
    <property type="project" value="GO_Central"/>
</dbReference>
<dbReference type="GO" id="GO:0005737">
    <property type="term" value="C:cytoplasm"/>
    <property type="evidence" value="ECO:0000318"/>
    <property type="project" value="GO_Central"/>
</dbReference>
<dbReference type="GO" id="GO:0005524">
    <property type="term" value="F:ATP binding"/>
    <property type="evidence" value="ECO:0007669"/>
    <property type="project" value="UniProtKB-UniRule"/>
</dbReference>
<dbReference type="GO" id="GO:0004088">
    <property type="term" value="F:carbamoyl-phosphate synthase (glutamine-hydrolyzing) activity"/>
    <property type="evidence" value="ECO:0007669"/>
    <property type="project" value="UniProtKB-UniRule"/>
</dbReference>
<dbReference type="GO" id="GO:0004359">
    <property type="term" value="F:glutaminase activity"/>
    <property type="evidence" value="ECO:0007669"/>
    <property type="project" value="RHEA"/>
</dbReference>
<dbReference type="GO" id="GO:0006207">
    <property type="term" value="P:'de novo' pyrimidine nucleobase biosynthetic process"/>
    <property type="evidence" value="ECO:0007669"/>
    <property type="project" value="InterPro"/>
</dbReference>
<dbReference type="GO" id="GO:0044205">
    <property type="term" value="P:'de novo' UMP biosynthetic process"/>
    <property type="evidence" value="ECO:0007669"/>
    <property type="project" value="UniProtKB-UniRule"/>
</dbReference>
<dbReference type="GO" id="GO:0006541">
    <property type="term" value="P:glutamine metabolic process"/>
    <property type="evidence" value="ECO:0007669"/>
    <property type="project" value="InterPro"/>
</dbReference>
<dbReference type="GO" id="GO:0006526">
    <property type="term" value="P:L-arginine biosynthetic process"/>
    <property type="evidence" value="ECO:0000318"/>
    <property type="project" value="GO_Central"/>
</dbReference>
<dbReference type="CDD" id="cd01744">
    <property type="entry name" value="GATase1_CPSase"/>
    <property type="match status" value="1"/>
</dbReference>
<dbReference type="FunFam" id="3.40.50.880:FF:000011">
    <property type="entry name" value="Carbamoyl-phosphate synthase small chain"/>
    <property type="match status" value="1"/>
</dbReference>
<dbReference type="FunFam" id="3.50.30.20:FF:000001">
    <property type="entry name" value="Carbamoyl-phosphate synthase small chain"/>
    <property type="match status" value="1"/>
</dbReference>
<dbReference type="Gene3D" id="3.40.50.880">
    <property type="match status" value="1"/>
</dbReference>
<dbReference type="Gene3D" id="3.50.30.20">
    <property type="entry name" value="Carbamoyl-phosphate synthase small subunit, N-terminal domain"/>
    <property type="match status" value="1"/>
</dbReference>
<dbReference type="HAMAP" id="MF_01209">
    <property type="entry name" value="CPSase_S_chain"/>
    <property type="match status" value="1"/>
</dbReference>
<dbReference type="InterPro" id="IPR050472">
    <property type="entry name" value="Anth_synth/Amidotransfase"/>
</dbReference>
<dbReference type="InterPro" id="IPR006274">
    <property type="entry name" value="CarbamoylP_synth_ssu"/>
</dbReference>
<dbReference type="InterPro" id="IPR002474">
    <property type="entry name" value="CarbamoylP_synth_ssu_N"/>
</dbReference>
<dbReference type="InterPro" id="IPR036480">
    <property type="entry name" value="CarbP_synth_ssu_N_sf"/>
</dbReference>
<dbReference type="InterPro" id="IPR029062">
    <property type="entry name" value="Class_I_gatase-like"/>
</dbReference>
<dbReference type="InterPro" id="IPR035686">
    <property type="entry name" value="CPSase_GATase1"/>
</dbReference>
<dbReference type="InterPro" id="IPR017926">
    <property type="entry name" value="GATASE"/>
</dbReference>
<dbReference type="NCBIfam" id="TIGR01368">
    <property type="entry name" value="CPSaseIIsmall"/>
    <property type="match status" value="1"/>
</dbReference>
<dbReference type="NCBIfam" id="NF009475">
    <property type="entry name" value="PRK12838.1"/>
    <property type="match status" value="1"/>
</dbReference>
<dbReference type="PANTHER" id="PTHR43418:SF7">
    <property type="entry name" value="CARBAMOYL-PHOSPHATE SYNTHASE SMALL CHAIN"/>
    <property type="match status" value="1"/>
</dbReference>
<dbReference type="PANTHER" id="PTHR43418">
    <property type="entry name" value="MULTIFUNCTIONAL TRYPTOPHAN BIOSYNTHESIS PROTEIN-RELATED"/>
    <property type="match status" value="1"/>
</dbReference>
<dbReference type="Pfam" id="PF00988">
    <property type="entry name" value="CPSase_sm_chain"/>
    <property type="match status" value="1"/>
</dbReference>
<dbReference type="Pfam" id="PF00117">
    <property type="entry name" value="GATase"/>
    <property type="match status" value="1"/>
</dbReference>
<dbReference type="PRINTS" id="PR00097">
    <property type="entry name" value="ANTSNTHASEII"/>
</dbReference>
<dbReference type="PRINTS" id="PR00099">
    <property type="entry name" value="CPSGATASE"/>
</dbReference>
<dbReference type="PRINTS" id="PR00096">
    <property type="entry name" value="GATASE"/>
</dbReference>
<dbReference type="SMART" id="SM01097">
    <property type="entry name" value="CPSase_sm_chain"/>
    <property type="match status" value="1"/>
</dbReference>
<dbReference type="SUPFAM" id="SSF52021">
    <property type="entry name" value="Carbamoyl phosphate synthetase, small subunit N-terminal domain"/>
    <property type="match status" value="1"/>
</dbReference>
<dbReference type="SUPFAM" id="SSF52317">
    <property type="entry name" value="Class I glutamine amidotransferase-like"/>
    <property type="match status" value="1"/>
</dbReference>
<dbReference type="PROSITE" id="PS51273">
    <property type="entry name" value="GATASE_TYPE_1"/>
    <property type="match status" value="1"/>
</dbReference>
<reference key="1">
    <citation type="journal article" date="1988" name="Eur. J. Biochem.">
        <title>Nucleotide sequence of the carA gene and regulation of the carAB operon in Salmonella typhimurium.</title>
        <authorList>
            <person name="Kilstrup M."/>
            <person name="Lu C.D."/>
            <person name="Abdelal A."/>
            <person name="Neuhard J."/>
        </authorList>
    </citation>
    <scope>NUCLEOTIDE SEQUENCE [GENOMIC DNA]</scope>
    <source>
        <strain>LT2</strain>
    </source>
</reference>
<reference key="2">
    <citation type="submission" date="1996-12" db="EMBL/GenBank/DDBJ databases">
        <authorList>
            <person name="Lu C.D."/>
            <person name="Walthall D.A."/>
            <person name="Abdelal A.T."/>
        </authorList>
    </citation>
    <scope>NUCLEOTIDE SEQUENCE [GENOMIC DNA]</scope>
    <source>
        <strain>LT2</strain>
    </source>
</reference>
<reference key="3">
    <citation type="journal article" date="2001" name="Nature">
        <title>Complete genome sequence of Salmonella enterica serovar Typhimurium LT2.</title>
        <authorList>
            <person name="McClelland M."/>
            <person name="Sanderson K.E."/>
            <person name="Spieth J."/>
            <person name="Clifton S.W."/>
            <person name="Latreille P."/>
            <person name="Courtney L."/>
            <person name="Porwollik S."/>
            <person name="Ali J."/>
            <person name="Dante M."/>
            <person name="Du F."/>
            <person name="Hou S."/>
            <person name="Layman D."/>
            <person name="Leonard S."/>
            <person name="Nguyen C."/>
            <person name="Scott K."/>
            <person name="Holmes A."/>
            <person name="Grewal N."/>
            <person name="Mulvaney E."/>
            <person name="Ryan E."/>
            <person name="Sun H."/>
            <person name="Florea L."/>
            <person name="Miller W."/>
            <person name="Stoneking T."/>
            <person name="Nhan M."/>
            <person name="Waterston R."/>
            <person name="Wilson R.K."/>
        </authorList>
    </citation>
    <scope>NUCLEOTIDE SEQUENCE [LARGE SCALE GENOMIC DNA]</scope>
    <source>
        <strain>LT2 / SGSC1412 / ATCC 700720</strain>
    </source>
</reference>
<comment type="function">
    <text evidence="1">Small subunit of the glutamine-dependent carbamoyl phosphate synthetase (CPSase). CPSase catalyzes the formation of carbamoyl phosphate from the ammonia moiety of glutamine, carbonate, and phosphate donated by ATP, constituting the first step of 2 biosynthetic pathways, one leading to arginine and/or urea and the other to pyrimidine nucleotides. The small subunit (glutamine amidotransferase) binds and cleaves glutamine to supply the large subunit with the substrate ammonia.</text>
</comment>
<comment type="catalytic activity">
    <reaction evidence="1">
        <text>hydrogencarbonate + L-glutamine + 2 ATP + H2O = carbamoyl phosphate + L-glutamate + 2 ADP + phosphate + 2 H(+)</text>
        <dbReference type="Rhea" id="RHEA:18633"/>
        <dbReference type="ChEBI" id="CHEBI:15377"/>
        <dbReference type="ChEBI" id="CHEBI:15378"/>
        <dbReference type="ChEBI" id="CHEBI:17544"/>
        <dbReference type="ChEBI" id="CHEBI:29985"/>
        <dbReference type="ChEBI" id="CHEBI:30616"/>
        <dbReference type="ChEBI" id="CHEBI:43474"/>
        <dbReference type="ChEBI" id="CHEBI:58228"/>
        <dbReference type="ChEBI" id="CHEBI:58359"/>
        <dbReference type="ChEBI" id="CHEBI:456216"/>
        <dbReference type="EC" id="6.3.5.5"/>
    </reaction>
</comment>
<comment type="catalytic activity">
    <molecule>Carbamoyl phosphate synthase small chain</molecule>
    <reaction evidence="1">
        <text>L-glutamine + H2O = L-glutamate + NH4(+)</text>
        <dbReference type="Rhea" id="RHEA:15889"/>
        <dbReference type="ChEBI" id="CHEBI:15377"/>
        <dbReference type="ChEBI" id="CHEBI:28938"/>
        <dbReference type="ChEBI" id="CHEBI:29985"/>
        <dbReference type="ChEBI" id="CHEBI:58359"/>
    </reaction>
</comment>
<comment type="pathway">
    <text evidence="1">Amino-acid biosynthesis; L-arginine biosynthesis; carbamoyl phosphate from bicarbonate: step 1/1.</text>
</comment>
<comment type="pathway">
    <text evidence="1">Pyrimidine metabolism; UMP biosynthesis via de novo pathway; (S)-dihydroorotate from bicarbonate: step 1/3.</text>
</comment>
<comment type="subunit">
    <text evidence="1">Composed of two chains; the small (or glutamine) chain promotes the hydrolysis of glutamine to ammonia, which is used by the large (or ammonia) chain to synthesize carbamoyl phosphate. Tetramer of heterodimers (alpha,beta)4.</text>
</comment>
<comment type="similarity">
    <text evidence="1">Belongs to the CarA family.</text>
</comment>
<accession>P14845</accession>
<protein>
    <recommendedName>
        <fullName evidence="1">Carbamoyl phosphate synthase small chain</fullName>
        <ecNumber evidence="1">6.3.5.5</ecNumber>
    </recommendedName>
    <alternativeName>
        <fullName evidence="1">Carbamoyl phosphate synthetase glutamine chain</fullName>
    </alternativeName>
</protein>